<dbReference type="EC" id="1.17.7.4" evidence="1"/>
<dbReference type="EMBL" id="CP000672">
    <property type="protein sequence ID" value="ABR00545.1"/>
    <property type="molecule type" value="Genomic_DNA"/>
</dbReference>
<dbReference type="SMR" id="A5UID9"/>
<dbReference type="KEGG" id="hiq:CGSHiGG_08635"/>
<dbReference type="HOGENOM" id="CLU_027486_1_0_6"/>
<dbReference type="UniPathway" id="UPA00056">
    <property type="reaction ID" value="UER00097"/>
</dbReference>
<dbReference type="UniPathway" id="UPA00059">
    <property type="reaction ID" value="UER00105"/>
</dbReference>
<dbReference type="Proteomes" id="UP000001990">
    <property type="component" value="Chromosome"/>
</dbReference>
<dbReference type="GO" id="GO:0051539">
    <property type="term" value="F:4 iron, 4 sulfur cluster binding"/>
    <property type="evidence" value="ECO:0007669"/>
    <property type="project" value="UniProtKB-UniRule"/>
</dbReference>
<dbReference type="GO" id="GO:0051745">
    <property type="term" value="F:4-hydroxy-3-methylbut-2-enyl diphosphate reductase activity"/>
    <property type="evidence" value="ECO:0007669"/>
    <property type="project" value="UniProtKB-UniRule"/>
</dbReference>
<dbReference type="GO" id="GO:0046872">
    <property type="term" value="F:metal ion binding"/>
    <property type="evidence" value="ECO:0007669"/>
    <property type="project" value="UniProtKB-KW"/>
</dbReference>
<dbReference type="GO" id="GO:0050992">
    <property type="term" value="P:dimethylallyl diphosphate biosynthetic process"/>
    <property type="evidence" value="ECO:0007669"/>
    <property type="project" value="UniProtKB-UniRule"/>
</dbReference>
<dbReference type="GO" id="GO:0019288">
    <property type="term" value="P:isopentenyl diphosphate biosynthetic process, methylerythritol 4-phosphate pathway"/>
    <property type="evidence" value="ECO:0007669"/>
    <property type="project" value="UniProtKB-UniRule"/>
</dbReference>
<dbReference type="GO" id="GO:0016114">
    <property type="term" value="P:terpenoid biosynthetic process"/>
    <property type="evidence" value="ECO:0007669"/>
    <property type="project" value="UniProtKB-UniRule"/>
</dbReference>
<dbReference type="CDD" id="cd13944">
    <property type="entry name" value="lytB_ispH"/>
    <property type="match status" value="1"/>
</dbReference>
<dbReference type="Gene3D" id="3.40.50.11270">
    <property type="match status" value="1"/>
</dbReference>
<dbReference type="Gene3D" id="3.40.1010.20">
    <property type="entry name" value="4-hydroxy-3-methylbut-2-enyl diphosphate reductase, catalytic domain"/>
    <property type="match status" value="2"/>
</dbReference>
<dbReference type="HAMAP" id="MF_00191">
    <property type="entry name" value="IspH"/>
    <property type="match status" value="1"/>
</dbReference>
<dbReference type="InterPro" id="IPR003451">
    <property type="entry name" value="LytB/IspH"/>
</dbReference>
<dbReference type="NCBIfam" id="TIGR00216">
    <property type="entry name" value="ispH_lytB"/>
    <property type="match status" value="1"/>
</dbReference>
<dbReference type="NCBIfam" id="NF002188">
    <property type="entry name" value="PRK01045.1-2"/>
    <property type="match status" value="1"/>
</dbReference>
<dbReference type="NCBIfam" id="NF002190">
    <property type="entry name" value="PRK01045.1-4"/>
    <property type="match status" value="1"/>
</dbReference>
<dbReference type="PANTHER" id="PTHR30426">
    <property type="entry name" value="4-HYDROXY-3-METHYLBUT-2-ENYL DIPHOSPHATE REDUCTASE"/>
    <property type="match status" value="1"/>
</dbReference>
<dbReference type="PANTHER" id="PTHR30426:SF0">
    <property type="entry name" value="4-HYDROXY-3-METHYLBUT-2-ENYL DIPHOSPHATE REDUCTASE"/>
    <property type="match status" value="1"/>
</dbReference>
<dbReference type="Pfam" id="PF02401">
    <property type="entry name" value="LYTB"/>
    <property type="match status" value="1"/>
</dbReference>
<keyword id="KW-0004">4Fe-4S</keyword>
<keyword id="KW-0408">Iron</keyword>
<keyword id="KW-0411">Iron-sulfur</keyword>
<keyword id="KW-0414">Isoprene biosynthesis</keyword>
<keyword id="KW-0479">Metal-binding</keyword>
<keyword id="KW-0560">Oxidoreductase</keyword>
<name>ISPH_HAEIG</name>
<organism>
    <name type="scientific">Haemophilus influenzae (strain PittGG)</name>
    <dbReference type="NCBI Taxonomy" id="374931"/>
    <lineage>
        <taxon>Bacteria</taxon>
        <taxon>Pseudomonadati</taxon>
        <taxon>Pseudomonadota</taxon>
        <taxon>Gammaproteobacteria</taxon>
        <taxon>Pasteurellales</taxon>
        <taxon>Pasteurellaceae</taxon>
        <taxon>Haemophilus</taxon>
    </lineage>
</organism>
<gene>
    <name evidence="1" type="primary">ispH</name>
    <name type="ordered locus">CGSHiGG_08635</name>
</gene>
<comment type="function">
    <text evidence="1">Catalyzes the conversion of 1-hydroxy-2-methyl-2-(E)-butenyl 4-diphosphate (HMBPP) into a mixture of isopentenyl diphosphate (IPP) and dimethylallyl diphosphate (DMAPP). Acts in the terminal step of the DOXP/MEP pathway for isoprenoid precursor biosynthesis.</text>
</comment>
<comment type="catalytic activity">
    <reaction evidence="1">
        <text>isopentenyl diphosphate + 2 oxidized [2Fe-2S]-[ferredoxin] + H2O = (2E)-4-hydroxy-3-methylbut-2-enyl diphosphate + 2 reduced [2Fe-2S]-[ferredoxin] + 2 H(+)</text>
        <dbReference type="Rhea" id="RHEA:24488"/>
        <dbReference type="Rhea" id="RHEA-COMP:10000"/>
        <dbReference type="Rhea" id="RHEA-COMP:10001"/>
        <dbReference type="ChEBI" id="CHEBI:15377"/>
        <dbReference type="ChEBI" id="CHEBI:15378"/>
        <dbReference type="ChEBI" id="CHEBI:33737"/>
        <dbReference type="ChEBI" id="CHEBI:33738"/>
        <dbReference type="ChEBI" id="CHEBI:128753"/>
        <dbReference type="ChEBI" id="CHEBI:128769"/>
        <dbReference type="EC" id="1.17.7.4"/>
    </reaction>
</comment>
<comment type="catalytic activity">
    <reaction evidence="1">
        <text>dimethylallyl diphosphate + 2 oxidized [2Fe-2S]-[ferredoxin] + H2O = (2E)-4-hydroxy-3-methylbut-2-enyl diphosphate + 2 reduced [2Fe-2S]-[ferredoxin] + 2 H(+)</text>
        <dbReference type="Rhea" id="RHEA:24825"/>
        <dbReference type="Rhea" id="RHEA-COMP:10000"/>
        <dbReference type="Rhea" id="RHEA-COMP:10001"/>
        <dbReference type="ChEBI" id="CHEBI:15377"/>
        <dbReference type="ChEBI" id="CHEBI:15378"/>
        <dbReference type="ChEBI" id="CHEBI:33737"/>
        <dbReference type="ChEBI" id="CHEBI:33738"/>
        <dbReference type="ChEBI" id="CHEBI:57623"/>
        <dbReference type="ChEBI" id="CHEBI:128753"/>
        <dbReference type="EC" id="1.17.7.4"/>
    </reaction>
</comment>
<comment type="cofactor">
    <cofactor evidence="1">
        <name>[4Fe-4S] cluster</name>
        <dbReference type="ChEBI" id="CHEBI:49883"/>
    </cofactor>
    <text evidence="1">Binds 1 [4Fe-4S] cluster per subunit.</text>
</comment>
<comment type="pathway">
    <text evidence="1">Isoprenoid biosynthesis; dimethylallyl diphosphate biosynthesis; dimethylallyl diphosphate from (2E)-4-hydroxy-3-methylbutenyl diphosphate: step 1/1.</text>
</comment>
<comment type="pathway">
    <text evidence="1">Isoprenoid biosynthesis; isopentenyl diphosphate biosynthesis via DXP pathway; isopentenyl diphosphate from 1-deoxy-D-xylulose 5-phosphate: step 6/6.</text>
</comment>
<comment type="similarity">
    <text evidence="1">Belongs to the IspH family.</text>
</comment>
<feature type="chain" id="PRO_1000021130" description="4-hydroxy-3-methylbut-2-enyl diphosphate reductase">
    <location>
        <begin position="1"/>
        <end position="314"/>
    </location>
</feature>
<feature type="active site" description="Proton donor" evidence="1">
    <location>
        <position position="126"/>
    </location>
</feature>
<feature type="binding site" evidence="1">
    <location>
        <position position="12"/>
    </location>
    <ligand>
        <name>[4Fe-4S] cluster</name>
        <dbReference type="ChEBI" id="CHEBI:49883"/>
    </ligand>
</feature>
<feature type="binding site" evidence="1">
    <location>
        <position position="41"/>
    </location>
    <ligand>
        <name>(2E)-4-hydroxy-3-methylbut-2-enyl diphosphate</name>
        <dbReference type="ChEBI" id="CHEBI:128753"/>
    </ligand>
</feature>
<feature type="binding site" evidence="1">
    <location>
        <position position="41"/>
    </location>
    <ligand>
        <name>dimethylallyl diphosphate</name>
        <dbReference type="ChEBI" id="CHEBI:57623"/>
    </ligand>
</feature>
<feature type="binding site" evidence="1">
    <location>
        <position position="41"/>
    </location>
    <ligand>
        <name>isopentenyl diphosphate</name>
        <dbReference type="ChEBI" id="CHEBI:128769"/>
    </ligand>
</feature>
<feature type="binding site" evidence="1">
    <location>
        <position position="74"/>
    </location>
    <ligand>
        <name>(2E)-4-hydroxy-3-methylbut-2-enyl diphosphate</name>
        <dbReference type="ChEBI" id="CHEBI:128753"/>
    </ligand>
</feature>
<feature type="binding site" evidence="1">
    <location>
        <position position="74"/>
    </location>
    <ligand>
        <name>dimethylallyl diphosphate</name>
        <dbReference type="ChEBI" id="CHEBI:57623"/>
    </ligand>
</feature>
<feature type="binding site" evidence="1">
    <location>
        <position position="74"/>
    </location>
    <ligand>
        <name>isopentenyl diphosphate</name>
        <dbReference type="ChEBI" id="CHEBI:128769"/>
    </ligand>
</feature>
<feature type="binding site" evidence="1">
    <location>
        <position position="96"/>
    </location>
    <ligand>
        <name>[4Fe-4S] cluster</name>
        <dbReference type="ChEBI" id="CHEBI:49883"/>
    </ligand>
</feature>
<feature type="binding site" evidence="1">
    <location>
        <position position="124"/>
    </location>
    <ligand>
        <name>(2E)-4-hydroxy-3-methylbut-2-enyl diphosphate</name>
        <dbReference type="ChEBI" id="CHEBI:128753"/>
    </ligand>
</feature>
<feature type="binding site" evidence="1">
    <location>
        <position position="124"/>
    </location>
    <ligand>
        <name>dimethylallyl diphosphate</name>
        <dbReference type="ChEBI" id="CHEBI:57623"/>
    </ligand>
</feature>
<feature type="binding site" evidence="1">
    <location>
        <position position="124"/>
    </location>
    <ligand>
        <name>isopentenyl diphosphate</name>
        <dbReference type="ChEBI" id="CHEBI:128769"/>
    </ligand>
</feature>
<feature type="binding site" evidence="1">
    <location>
        <position position="167"/>
    </location>
    <ligand>
        <name>(2E)-4-hydroxy-3-methylbut-2-enyl diphosphate</name>
        <dbReference type="ChEBI" id="CHEBI:128753"/>
    </ligand>
</feature>
<feature type="binding site" evidence="1">
    <location>
        <position position="197"/>
    </location>
    <ligand>
        <name>[4Fe-4S] cluster</name>
        <dbReference type="ChEBI" id="CHEBI:49883"/>
    </ligand>
</feature>
<feature type="binding site" evidence="1">
    <location>
        <position position="225"/>
    </location>
    <ligand>
        <name>(2E)-4-hydroxy-3-methylbut-2-enyl diphosphate</name>
        <dbReference type="ChEBI" id="CHEBI:128753"/>
    </ligand>
</feature>
<feature type="binding site" evidence="1">
    <location>
        <position position="225"/>
    </location>
    <ligand>
        <name>dimethylallyl diphosphate</name>
        <dbReference type="ChEBI" id="CHEBI:57623"/>
    </ligand>
</feature>
<feature type="binding site" evidence="1">
    <location>
        <position position="225"/>
    </location>
    <ligand>
        <name>isopentenyl diphosphate</name>
        <dbReference type="ChEBI" id="CHEBI:128769"/>
    </ligand>
</feature>
<feature type="binding site" evidence="1">
    <location>
        <position position="226"/>
    </location>
    <ligand>
        <name>(2E)-4-hydroxy-3-methylbut-2-enyl diphosphate</name>
        <dbReference type="ChEBI" id="CHEBI:128753"/>
    </ligand>
</feature>
<feature type="binding site" evidence="1">
    <location>
        <position position="226"/>
    </location>
    <ligand>
        <name>dimethylallyl diphosphate</name>
        <dbReference type="ChEBI" id="CHEBI:57623"/>
    </ligand>
</feature>
<feature type="binding site" evidence="1">
    <location>
        <position position="226"/>
    </location>
    <ligand>
        <name>isopentenyl diphosphate</name>
        <dbReference type="ChEBI" id="CHEBI:128769"/>
    </ligand>
</feature>
<feature type="binding site" evidence="1">
    <location>
        <position position="227"/>
    </location>
    <ligand>
        <name>(2E)-4-hydroxy-3-methylbut-2-enyl diphosphate</name>
        <dbReference type="ChEBI" id="CHEBI:128753"/>
    </ligand>
</feature>
<feature type="binding site" evidence="1">
    <location>
        <position position="227"/>
    </location>
    <ligand>
        <name>dimethylallyl diphosphate</name>
        <dbReference type="ChEBI" id="CHEBI:57623"/>
    </ligand>
</feature>
<feature type="binding site" evidence="1">
    <location>
        <position position="227"/>
    </location>
    <ligand>
        <name>isopentenyl diphosphate</name>
        <dbReference type="ChEBI" id="CHEBI:128769"/>
    </ligand>
</feature>
<feature type="binding site" evidence="1">
    <location>
        <position position="269"/>
    </location>
    <ligand>
        <name>(2E)-4-hydroxy-3-methylbut-2-enyl diphosphate</name>
        <dbReference type="ChEBI" id="CHEBI:128753"/>
    </ligand>
</feature>
<feature type="binding site" evidence="1">
    <location>
        <position position="269"/>
    </location>
    <ligand>
        <name>dimethylallyl diphosphate</name>
        <dbReference type="ChEBI" id="CHEBI:57623"/>
    </ligand>
</feature>
<feature type="binding site" evidence="1">
    <location>
        <position position="269"/>
    </location>
    <ligand>
        <name>isopentenyl diphosphate</name>
        <dbReference type="ChEBI" id="CHEBI:128769"/>
    </ligand>
</feature>
<evidence type="ECO:0000255" key="1">
    <source>
        <dbReference type="HAMAP-Rule" id="MF_00191"/>
    </source>
</evidence>
<reference key="1">
    <citation type="journal article" date="2007" name="Genome Biol.">
        <title>Characterization and modeling of the Haemophilus influenzae core and supragenomes based on the complete genomic sequences of Rd and 12 clinical nontypeable strains.</title>
        <authorList>
            <person name="Hogg J.S."/>
            <person name="Hu F.Z."/>
            <person name="Janto B."/>
            <person name="Boissy R."/>
            <person name="Hayes J."/>
            <person name="Keefe R."/>
            <person name="Post J.C."/>
            <person name="Ehrlich G.D."/>
        </authorList>
    </citation>
    <scope>NUCLEOTIDE SEQUENCE [LARGE SCALE GENOMIC DNA]</scope>
    <source>
        <strain>PittGG</strain>
    </source>
</reference>
<protein>
    <recommendedName>
        <fullName evidence="1">4-hydroxy-3-methylbut-2-enyl diphosphate reductase</fullName>
        <shortName evidence="1">HMBPP reductase</shortName>
        <ecNumber evidence="1">1.17.7.4</ecNumber>
    </recommendedName>
</protein>
<proteinExistence type="inferred from homology"/>
<sequence length="314" mass="34602">MKIILANPRGFCAGVDRAISIVELALEIHGAPIYVRHEVVHNRFVVNGLRDRGAIFVEELSEVPDGAIVIFSAHGVSQAVRQEAKDRNLKVFDATCPLVTKVHMQVARASRKGTKAILIGHKGHPEVEGTMGQYSNEDGGIFLIEKVEDIARLPMQDNDDLTFMTQTTLSLDDTAETIAALKEKYPAIQGPHKNDICYATTNRQEAVRELAKLSDLVLVVGSKNSSNSNRLAELASRMGIKSQLLDDPSDIQDDWFNDVKTIGITAGASAPEELVQSIISRLKEFGANTIEELQGLEENMFFEVPKELRIKEVN</sequence>
<accession>A5UID9</accession>